<reference key="1">
    <citation type="journal article" date="2000" name="DNA Res.">
        <title>Prediction of the coding sequences of unidentified human genes. XVI. The complete sequences of 150 new cDNA clones from brain which code for large proteins in vitro.</title>
        <authorList>
            <person name="Nagase T."/>
            <person name="Kikuno R."/>
            <person name="Ishikawa K."/>
            <person name="Hirosawa M."/>
            <person name="Ohara O."/>
        </authorList>
    </citation>
    <scope>NUCLEOTIDE SEQUENCE [LARGE SCALE MRNA] (ISOFORM 1)</scope>
    <source>
        <tissue>Brain</tissue>
    </source>
</reference>
<reference key="2">
    <citation type="journal article" date="2004" name="Nat. Genet.">
        <title>Complete sequencing and characterization of 21,243 full-length human cDNAs.</title>
        <authorList>
            <person name="Ota T."/>
            <person name="Suzuki Y."/>
            <person name="Nishikawa T."/>
            <person name="Otsuki T."/>
            <person name="Sugiyama T."/>
            <person name="Irie R."/>
            <person name="Wakamatsu A."/>
            <person name="Hayashi K."/>
            <person name="Sato H."/>
            <person name="Nagai K."/>
            <person name="Kimura K."/>
            <person name="Makita H."/>
            <person name="Sekine M."/>
            <person name="Obayashi M."/>
            <person name="Nishi T."/>
            <person name="Shibahara T."/>
            <person name="Tanaka T."/>
            <person name="Ishii S."/>
            <person name="Yamamoto J."/>
            <person name="Saito K."/>
            <person name="Kawai Y."/>
            <person name="Isono Y."/>
            <person name="Nakamura Y."/>
            <person name="Nagahari K."/>
            <person name="Murakami K."/>
            <person name="Yasuda T."/>
            <person name="Iwayanagi T."/>
            <person name="Wagatsuma M."/>
            <person name="Shiratori A."/>
            <person name="Sudo H."/>
            <person name="Hosoiri T."/>
            <person name="Kaku Y."/>
            <person name="Kodaira H."/>
            <person name="Kondo H."/>
            <person name="Sugawara M."/>
            <person name="Takahashi M."/>
            <person name="Kanda K."/>
            <person name="Yokoi T."/>
            <person name="Furuya T."/>
            <person name="Kikkawa E."/>
            <person name="Omura Y."/>
            <person name="Abe K."/>
            <person name="Kamihara K."/>
            <person name="Katsuta N."/>
            <person name="Sato K."/>
            <person name="Tanikawa M."/>
            <person name="Yamazaki M."/>
            <person name="Ninomiya K."/>
            <person name="Ishibashi T."/>
            <person name="Yamashita H."/>
            <person name="Murakawa K."/>
            <person name="Fujimori K."/>
            <person name="Tanai H."/>
            <person name="Kimata M."/>
            <person name="Watanabe M."/>
            <person name="Hiraoka S."/>
            <person name="Chiba Y."/>
            <person name="Ishida S."/>
            <person name="Ono Y."/>
            <person name="Takiguchi S."/>
            <person name="Watanabe S."/>
            <person name="Yosida M."/>
            <person name="Hotuta T."/>
            <person name="Kusano J."/>
            <person name="Kanehori K."/>
            <person name="Takahashi-Fujii A."/>
            <person name="Hara H."/>
            <person name="Tanase T.-O."/>
            <person name="Nomura Y."/>
            <person name="Togiya S."/>
            <person name="Komai F."/>
            <person name="Hara R."/>
            <person name="Takeuchi K."/>
            <person name="Arita M."/>
            <person name="Imose N."/>
            <person name="Musashino K."/>
            <person name="Yuuki H."/>
            <person name="Oshima A."/>
            <person name="Sasaki N."/>
            <person name="Aotsuka S."/>
            <person name="Yoshikawa Y."/>
            <person name="Matsunawa H."/>
            <person name="Ichihara T."/>
            <person name="Shiohata N."/>
            <person name="Sano S."/>
            <person name="Moriya S."/>
            <person name="Momiyama H."/>
            <person name="Satoh N."/>
            <person name="Takami S."/>
            <person name="Terashima Y."/>
            <person name="Suzuki O."/>
            <person name="Nakagawa S."/>
            <person name="Senoh A."/>
            <person name="Mizoguchi H."/>
            <person name="Goto Y."/>
            <person name="Shimizu F."/>
            <person name="Wakebe H."/>
            <person name="Hishigaki H."/>
            <person name="Watanabe T."/>
            <person name="Sugiyama A."/>
            <person name="Takemoto M."/>
            <person name="Kawakami B."/>
            <person name="Yamazaki M."/>
            <person name="Watanabe K."/>
            <person name="Kumagai A."/>
            <person name="Itakura S."/>
            <person name="Fukuzumi Y."/>
            <person name="Fujimori Y."/>
            <person name="Komiyama M."/>
            <person name="Tashiro H."/>
            <person name="Tanigami A."/>
            <person name="Fujiwara T."/>
            <person name="Ono T."/>
            <person name="Yamada K."/>
            <person name="Fujii Y."/>
            <person name="Ozaki K."/>
            <person name="Hirao M."/>
            <person name="Ohmori Y."/>
            <person name="Kawabata A."/>
            <person name="Hikiji T."/>
            <person name="Kobatake N."/>
            <person name="Inagaki H."/>
            <person name="Ikema Y."/>
            <person name="Okamoto S."/>
            <person name="Okitani R."/>
            <person name="Kawakami T."/>
            <person name="Noguchi S."/>
            <person name="Itoh T."/>
            <person name="Shigeta K."/>
            <person name="Senba T."/>
            <person name="Matsumura K."/>
            <person name="Nakajima Y."/>
            <person name="Mizuno T."/>
            <person name="Morinaga M."/>
            <person name="Sasaki M."/>
            <person name="Togashi T."/>
            <person name="Oyama M."/>
            <person name="Hata H."/>
            <person name="Watanabe M."/>
            <person name="Komatsu T."/>
            <person name="Mizushima-Sugano J."/>
            <person name="Satoh T."/>
            <person name="Shirai Y."/>
            <person name="Takahashi Y."/>
            <person name="Nakagawa K."/>
            <person name="Okumura K."/>
            <person name="Nagase T."/>
            <person name="Nomura N."/>
            <person name="Kikuchi H."/>
            <person name="Masuho Y."/>
            <person name="Yamashita R."/>
            <person name="Nakai K."/>
            <person name="Yada T."/>
            <person name="Nakamura Y."/>
            <person name="Ohara O."/>
            <person name="Isogai T."/>
            <person name="Sugano S."/>
        </authorList>
    </citation>
    <scope>NUCLEOTIDE SEQUENCE [LARGE SCALE MRNA] (ISOFORMS 1; 3 AND 4)</scope>
    <source>
        <tissue>Pericardium</tissue>
        <tissue>Teratocarcinoma</tissue>
        <tissue>Testis</tissue>
    </source>
</reference>
<reference key="3">
    <citation type="journal article" date="2006" name="Nature">
        <title>The DNA sequence and biological annotation of human chromosome 1.</title>
        <authorList>
            <person name="Gregory S.G."/>
            <person name="Barlow K.F."/>
            <person name="McLay K.E."/>
            <person name="Kaul R."/>
            <person name="Swarbreck D."/>
            <person name="Dunham A."/>
            <person name="Scott C.E."/>
            <person name="Howe K.L."/>
            <person name="Woodfine K."/>
            <person name="Spencer C.C.A."/>
            <person name="Jones M.C."/>
            <person name="Gillson C."/>
            <person name="Searle S."/>
            <person name="Zhou Y."/>
            <person name="Kokocinski F."/>
            <person name="McDonald L."/>
            <person name="Evans R."/>
            <person name="Phillips K."/>
            <person name="Atkinson A."/>
            <person name="Cooper R."/>
            <person name="Jones C."/>
            <person name="Hall R.E."/>
            <person name="Andrews T.D."/>
            <person name="Lloyd C."/>
            <person name="Ainscough R."/>
            <person name="Almeida J.P."/>
            <person name="Ambrose K.D."/>
            <person name="Anderson F."/>
            <person name="Andrew R.W."/>
            <person name="Ashwell R.I.S."/>
            <person name="Aubin K."/>
            <person name="Babbage A.K."/>
            <person name="Bagguley C.L."/>
            <person name="Bailey J."/>
            <person name="Beasley H."/>
            <person name="Bethel G."/>
            <person name="Bird C.P."/>
            <person name="Bray-Allen S."/>
            <person name="Brown J.Y."/>
            <person name="Brown A.J."/>
            <person name="Buckley D."/>
            <person name="Burton J."/>
            <person name="Bye J."/>
            <person name="Carder C."/>
            <person name="Chapman J.C."/>
            <person name="Clark S.Y."/>
            <person name="Clarke G."/>
            <person name="Clee C."/>
            <person name="Cobley V."/>
            <person name="Collier R.E."/>
            <person name="Corby N."/>
            <person name="Coville G.J."/>
            <person name="Davies J."/>
            <person name="Deadman R."/>
            <person name="Dunn M."/>
            <person name="Earthrowl M."/>
            <person name="Ellington A.G."/>
            <person name="Errington H."/>
            <person name="Frankish A."/>
            <person name="Frankland J."/>
            <person name="French L."/>
            <person name="Garner P."/>
            <person name="Garnett J."/>
            <person name="Gay L."/>
            <person name="Ghori M.R.J."/>
            <person name="Gibson R."/>
            <person name="Gilby L.M."/>
            <person name="Gillett W."/>
            <person name="Glithero R.J."/>
            <person name="Grafham D.V."/>
            <person name="Griffiths C."/>
            <person name="Griffiths-Jones S."/>
            <person name="Grocock R."/>
            <person name="Hammond S."/>
            <person name="Harrison E.S.I."/>
            <person name="Hart E."/>
            <person name="Haugen E."/>
            <person name="Heath P.D."/>
            <person name="Holmes S."/>
            <person name="Holt K."/>
            <person name="Howden P.J."/>
            <person name="Hunt A.R."/>
            <person name="Hunt S.E."/>
            <person name="Hunter G."/>
            <person name="Isherwood J."/>
            <person name="James R."/>
            <person name="Johnson C."/>
            <person name="Johnson D."/>
            <person name="Joy A."/>
            <person name="Kay M."/>
            <person name="Kershaw J.K."/>
            <person name="Kibukawa M."/>
            <person name="Kimberley A.M."/>
            <person name="King A."/>
            <person name="Knights A.J."/>
            <person name="Lad H."/>
            <person name="Laird G."/>
            <person name="Lawlor S."/>
            <person name="Leongamornlert D.A."/>
            <person name="Lloyd D.M."/>
            <person name="Loveland J."/>
            <person name="Lovell J."/>
            <person name="Lush M.J."/>
            <person name="Lyne R."/>
            <person name="Martin S."/>
            <person name="Mashreghi-Mohammadi M."/>
            <person name="Matthews L."/>
            <person name="Matthews N.S.W."/>
            <person name="McLaren S."/>
            <person name="Milne S."/>
            <person name="Mistry S."/>
            <person name="Moore M.J.F."/>
            <person name="Nickerson T."/>
            <person name="O'Dell C.N."/>
            <person name="Oliver K."/>
            <person name="Palmeiri A."/>
            <person name="Palmer S.A."/>
            <person name="Parker A."/>
            <person name="Patel D."/>
            <person name="Pearce A.V."/>
            <person name="Peck A.I."/>
            <person name="Pelan S."/>
            <person name="Phelps K."/>
            <person name="Phillimore B.J."/>
            <person name="Plumb R."/>
            <person name="Rajan J."/>
            <person name="Raymond C."/>
            <person name="Rouse G."/>
            <person name="Saenphimmachak C."/>
            <person name="Sehra H.K."/>
            <person name="Sheridan E."/>
            <person name="Shownkeen R."/>
            <person name="Sims S."/>
            <person name="Skuce C.D."/>
            <person name="Smith M."/>
            <person name="Steward C."/>
            <person name="Subramanian S."/>
            <person name="Sycamore N."/>
            <person name="Tracey A."/>
            <person name="Tromans A."/>
            <person name="Van Helmond Z."/>
            <person name="Wall M."/>
            <person name="Wallis J.M."/>
            <person name="White S."/>
            <person name="Whitehead S.L."/>
            <person name="Wilkinson J.E."/>
            <person name="Willey D.L."/>
            <person name="Williams H."/>
            <person name="Wilming L."/>
            <person name="Wray P.W."/>
            <person name="Wu Z."/>
            <person name="Coulson A."/>
            <person name="Vaudin M."/>
            <person name="Sulston J.E."/>
            <person name="Durbin R.M."/>
            <person name="Hubbard T."/>
            <person name="Wooster R."/>
            <person name="Dunham I."/>
            <person name="Carter N.P."/>
            <person name="McVean G."/>
            <person name="Ross M.T."/>
            <person name="Harrow J."/>
            <person name="Olson M.V."/>
            <person name="Beck S."/>
            <person name="Rogers J."/>
            <person name="Bentley D.R."/>
        </authorList>
    </citation>
    <scope>NUCLEOTIDE SEQUENCE [LARGE SCALE GENOMIC DNA]</scope>
</reference>
<reference key="4">
    <citation type="journal article" date="2004" name="Genome Res.">
        <title>The status, quality, and expansion of the NIH full-length cDNA project: the Mammalian Gene Collection (MGC).</title>
        <authorList>
            <consortium name="The MGC Project Team"/>
        </authorList>
    </citation>
    <scope>NUCLEOTIDE SEQUENCE [LARGE SCALE MRNA] (ISOFORM 2)</scope>
    <scope>VARIANT ARG-42</scope>
    <source>
        <tissue>Brain</tissue>
    </source>
</reference>
<reference key="5">
    <citation type="journal article" date="2009" name="Sci. Signal.">
        <title>Quantitative phosphoproteomic analysis of T cell receptor signaling reveals system-wide modulation of protein-protein interactions.</title>
        <authorList>
            <person name="Mayya V."/>
            <person name="Lundgren D.H."/>
            <person name="Hwang S.-I."/>
            <person name="Rezaul K."/>
            <person name="Wu L."/>
            <person name="Eng J.K."/>
            <person name="Rodionov V."/>
            <person name="Han D.K."/>
        </authorList>
    </citation>
    <scope>IDENTIFICATION BY MASS SPECTROMETRY [LARGE SCALE ANALYSIS]</scope>
    <source>
        <tissue>Leukemic T-cell</tissue>
    </source>
</reference>
<reference key="6">
    <citation type="journal article" date="2011" name="Sci. Signal.">
        <title>System-wide temporal characterization of the proteome and phosphoproteome of human embryonic stem cell differentiation.</title>
        <authorList>
            <person name="Rigbolt K.T."/>
            <person name="Prokhorova T.A."/>
            <person name="Akimov V."/>
            <person name="Henningsen J."/>
            <person name="Johansen P.T."/>
            <person name="Kratchmarova I."/>
            <person name="Kassem M."/>
            <person name="Mann M."/>
            <person name="Olsen J.V."/>
            <person name="Blagoev B."/>
        </authorList>
    </citation>
    <scope>PHOSPHORYLATION [LARGE SCALE ANALYSIS] AT SER-156</scope>
    <scope>IDENTIFICATION BY MASS SPECTROMETRY [LARGE SCALE ANALYSIS]</scope>
</reference>
<reference key="7">
    <citation type="journal article" date="2013" name="J. Proteome Res.">
        <title>Toward a comprehensive characterization of a human cancer cell phosphoproteome.</title>
        <authorList>
            <person name="Zhou H."/>
            <person name="Di Palma S."/>
            <person name="Preisinger C."/>
            <person name="Peng M."/>
            <person name="Polat A.N."/>
            <person name="Heck A.J."/>
            <person name="Mohammed S."/>
        </authorList>
    </citation>
    <scope>PHOSPHORYLATION [LARGE SCALE ANALYSIS] AT SER-156; SER-171 AND THR-376</scope>
    <scope>IDENTIFICATION BY MASS SPECTROMETRY [LARGE SCALE ANALYSIS]</scope>
    <source>
        <tissue>Cervix carcinoma</tissue>
        <tissue>Erythroleukemia</tissue>
    </source>
</reference>
<reference key="8">
    <citation type="journal article" date="2014" name="Mol. Cell. Proteomics">
        <title>Immunoaffinity enrichment and mass spectrometry analysis of protein methylation.</title>
        <authorList>
            <person name="Guo A."/>
            <person name="Gu H."/>
            <person name="Zhou J."/>
            <person name="Mulhern D."/>
            <person name="Wang Y."/>
            <person name="Lee K.A."/>
            <person name="Yang V."/>
            <person name="Aguiar M."/>
            <person name="Kornhauser J."/>
            <person name="Jia X."/>
            <person name="Ren J."/>
            <person name="Beausoleil S.A."/>
            <person name="Silva J.C."/>
            <person name="Vemulapalli V."/>
            <person name="Bedford M.T."/>
            <person name="Comb M.J."/>
        </authorList>
    </citation>
    <scope>METHYLATION [LARGE SCALE ANALYSIS] AT ARG-445 AND ARG-457</scope>
    <scope>IDENTIFICATION BY MASS SPECTROMETRY [LARGE SCALE ANALYSIS]</scope>
    <source>
        <tissue>Colon carcinoma</tissue>
    </source>
</reference>
<reference key="9">
    <citation type="journal article" date="2017" name="Nat. Struct. Mol. Biol.">
        <title>Site-specific mapping of the human SUMO proteome reveals co-modification with phosphorylation.</title>
        <authorList>
            <person name="Hendriks I.A."/>
            <person name="Lyon D."/>
            <person name="Young C."/>
            <person name="Jensen L.J."/>
            <person name="Vertegaal A.C."/>
            <person name="Nielsen M.L."/>
        </authorList>
    </citation>
    <scope>SUMOYLATION [LARGE SCALE ANALYSIS] AT LYS-20; LYS-193 AND LYS-285</scope>
    <scope>IDENTIFICATION BY MASS SPECTROMETRY [LARGE SCALE ANALYSIS]</scope>
</reference>
<proteinExistence type="evidence at protein level"/>
<name>RCOR3_HUMAN</name>
<comment type="function">
    <text evidence="8">May act as a component of a corepressor complex that represses transcription.</text>
</comment>
<comment type="interaction">
    <interactant intactId="EBI-743428">
        <id>Q9P2K3</id>
    </interactant>
    <interactant intactId="EBI-10171570">
        <id>Q68D86</id>
        <label>CCDC102B</label>
    </interactant>
    <organismsDiffer>false</organismsDiffer>
    <experiments>3</experiments>
</comment>
<comment type="interaction">
    <interactant intactId="EBI-743428">
        <id>Q9P2K3</id>
    </interactant>
    <interactant intactId="EBI-1181367">
        <id>Q01850</id>
        <label>CDR2</label>
    </interactant>
    <organismsDiffer>false</organismsDiffer>
    <experiments>3</experiments>
</comment>
<comment type="interaction">
    <interactant intactId="EBI-743428">
        <id>Q9P2K3</id>
    </interactant>
    <interactant intactId="EBI-747776">
        <id>Q53EZ4</id>
        <label>CEP55</label>
    </interactant>
    <organismsDiffer>false</organismsDiffer>
    <experiments>3</experiments>
</comment>
<comment type="interaction">
    <interactant intactId="EBI-743428">
        <id>Q9P2K3</id>
    </interactant>
    <interactant intactId="EBI-618309">
        <id>Q08379</id>
        <label>GOLGA2</label>
    </interactant>
    <organismsDiffer>false</organismsDiffer>
    <experiments>3</experiments>
</comment>
<comment type="interaction">
    <interactant intactId="EBI-743428">
        <id>Q9P2K3</id>
    </interactant>
    <interactant intactId="EBI-372619">
        <id>Q14687</id>
        <label>GSE1</label>
    </interactant>
    <organismsDiffer>false</organismsDiffer>
    <experiments>9</experiments>
</comment>
<comment type="interaction">
    <interactant intactId="EBI-743428">
        <id>Q9P2K3</id>
    </interactant>
    <interactant intactId="EBI-747204">
        <id>Q9UKT9</id>
        <label>IKZF3</label>
    </interactant>
    <organismsDiffer>false</organismsDiffer>
    <experiments>4</experiments>
</comment>
<comment type="interaction">
    <interactant intactId="EBI-743428">
        <id>Q9P2K3</id>
    </interactant>
    <interactant intactId="EBI-739566">
        <id>P19012</id>
        <label>KRT15</label>
    </interactant>
    <organismsDiffer>false</organismsDiffer>
    <experiments>5</experiments>
</comment>
<comment type="interaction">
    <interactant intactId="EBI-743428">
        <id>Q9P2K3</id>
    </interactant>
    <interactant intactId="EBI-948001">
        <id>Q15323</id>
        <label>KRT31</label>
    </interactant>
    <organismsDiffer>false</organismsDiffer>
    <experiments>3</experiments>
</comment>
<comment type="interaction">
    <interactant intactId="EBI-743428">
        <id>Q9P2K3</id>
    </interactant>
    <interactant intactId="EBI-10171697">
        <id>Q6A162</id>
        <label>KRT40</label>
    </interactant>
    <organismsDiffer>false</organismsDiffer>
    <experiments>3</experiments>
</comment>
<comment type="interaction">
    <interactant intactId="EBI-743428">
        <id>Q9P2K3</id>
    </interactant>
    <interactant intactId="EBI-6658186">
        <id>Q86VQ0</id>
        <label>LCA5</label>
    </interactant>
    <organismsDiffer>false</organismsDiffer>
    <experiments>3</experiments>
</comment>
<comment type="interaction">
    <interactant intactId="EBI-743428">
        <id>Q9P2K3</id>
    </interactant>
    <interactant intactId="EBI-10198848">
        <id>Q9P127</id>
        <label>LUZP4</label>
    </interactant>
    <organismsDiffer>false</organismsDiffer>
    <experiments>3</experiments>
</comment>
<comment type="interaction">
    <interactant intactId="EBI-743428">
        <id>Q9P2K3</id>
    </interactant>
    <interactant intactId="EBI-741037">
        <id>Q9BRK4</id>
        <label>LZTS2</label>
    </interactant>
    <organismsDiffer>false</organismsDiffer>
    <experiments>3</experiments>
</comment>
<comment type="interaction">
    <interactant intactId="EBI-743428">
        <id>Q9P2K3</id>
    </interactant>
    <interactant intactId="EBI-1045155">
        <id>P43360</id>
        <label>MAGEA6</label>
    </interactant>
    <organismsDiffer>false</organismsDiffer>
    <experiments>3</experiments>
</comment>
<comment type="interaction">
    <interactant intactId="EBI-743428">
        <id>Q9P2K3</id>
    </interactant>
    <interactant intactId="EBI-10172526">
        <id>Q9UJV3-2</id>
        <label>MID2</label>
    </interactant>
    <organismsDiffer>false</organismsDiffer>
    <experiments>3</experiments>
</comment>
<comment type="interaction">
    <interactant intactId="EBI-743428">
        <id>Q9P2K3</id>
    </interactant>
    <interactant intactId="EBI-2548751">
        <id>Q8TD10</id>
        <label>MIPOL1</label>
    </interactant>
    <organismsDiffer>false</organismsDiffer>
    <experiments>3</experiments>
</comment>
<comment type="interaction">
    <interactant intactId="EBI-743428">
        <id>Q9P2K3</id>
    </interactant>
    <interactant intactId="EBI-10172876">
        <id>Q7Z6G3-2</id>
        <label>NECAB2</label>
    </interactant>
    <organismsDiffer>false</organismsDiffer>
    <experiments>3</experiments>
</comment>
<comment type="interaction">
    <interactant intactId="EBI-743428">
        <id>Q9P2K3</id>
    </interactant>
    <interactant intactId="EBI-719716">
        <id>Q9Y2I6</id>
        <label>NINL</label>
    </interactant>
    <organismsDiffer>false</organismsDiffer>
    <experiments>4</experiments>
</comment>
<comment type="interaction">
    <interactant intactId="EBI-743428">
        <id>Q9P2K3</id>
    </interactant>
    <interactant intactId="EBI-3957793">
        <id>Q9GZV8</id>
        <label>PRDM14</label>
    </interactant>
    <organismsDiffer>false</organismsDiffer>
    <experiments>3</experiments>
</comment>
<comment type="interaction">
    <interactant intactId="EBI-743428">
        <id>Q9P2K3</id>
    </interactant>
    <interactant intactId="EBI-1105213">
        <id>Q9UBB9</id>
        <label>TFIP11</label>
    </interactant>
    <organismsDiffer>false</organismsDiffer>
    <experiments>3</experiments>
</comment>
<comment type="interaction">
    <interactant intactId="EBI-743428">
        <id>Q9P2K3</id>
    </interactant>
    <interactant intactId="EBI-355744">
        <id>Q12933</id>
        <label>TRAF2</label>
    </interactant>
    <organismsDiffer>false</organismsDiffer>
    <experiments>4</experiments>
</comment>
<comment type="interaction">
    <interactant intactId="EBI-743428">
        <id>Q9P2K3</id>
    </interactant>
    <interactant intactId="EBI-719493">
        <id>P14373</id>
        <label>TRIM27</label>
    </interactant>
    <organismsDiffer>false</organismsDiffer>
    <experiments>3</experiments>
</comment>
<comment type="interaction">
    <interactant intactId="EBI-743428">
        <id>Q9P2K3</id>
    </interactant>
    <interactant intactId="EBI-5235829">
        <id>Q8IWZ5</id>
        <label>TRIM42</label>
    </interactant>
    <organismsDiffer>false</organismsDiffer>
    <experiments>3</experiments>
</comment>
<comment type="interaction">
    <interactant intactId="EBI-743428">
        <id>Q9P2K3</id>
    </interactant>
    <interactant intactId="EBI-2130429">
        <id>Q9BYV2</id>
        <label>TRIM54</label>
    </interactant>
    <organismsDiffer>false</organismsDiffer>
    <experiments>3</experiments>
</comment>
<comment type="interaction">
    <interactant intactId="EBI-743428">
        <id>Q9P2K3</id>
    </interactant>
    <interactant intactId="EBI-744794">
        <id>Q9BZW7</id>
        <label>TSGA10</label>
    </interactant>
    <organismsDiffer>false</organismsDiffer>
    <experiments>3</experiments>
</comment>
<comment type="interaction">
    <interactant intactId="EBI-743428">
        <id>Q9P2K3</id>
    </interactant>
    <interactant intactId="EBI-359793">
        <id>P40222</id>
        <label>TXLNA</label>
    </interactant>
    <organismsDiffer>false</organismsDiffer>
    <experiments>3</experiments>
</comment>
<comment type="interaction">
    <interactant intactId="EBI-1504830">
        <id>Q9P2K3-2</id>
    </interactant>
    <interactant intactId="EBI-11743294">
        <id>Q8IZP0-5</id>
        <label>ABI1</label>
    </interactant>
    <organismsDiffer>false</organismsDiffer>
    <experiments>3</experiments>
</comment>
<comment type="interaction">
    <interactant intactId="EBI-1504830">
        <id>Q9P2K3-2</id>
    </interactant>
    <interactant intactId="EBI-17183751">
        <id>X5D778</id>
        <label>ANKRD11</label>
    </interactant>
    <organismsDiffer>false</organismsDiffer>
    <experiments>3</experiments>
</comment>
<comment type="interaction">
    <interactant intactId="EBI-1504830">
        <id>Q9P2K3-2</id>
    </interactant>
    <interactant intactId="EBI-10193358">
        <id>Q96GS4</id>
        <label>BORCS6</label>
    </interactant>
    <organismsDiffer>false</organismsDiffer>
    <experiments>3</experiments>
</comment>
<comment type="interaction">
    <interactant intactId="EBI-1504830">
        <id>Q9P2K3-2</id>
    </interactant>
    <interactant intactId="EBI-11524851">
        <id>Q8NA61-2</id>
        <label>CBY2</label>
    </interactant>
    <organismsDiffer>false</organismsDiffer>
    <experiments>3</experiments>
</comment>
<comment type="interaction">
    <interactant intactId="EBI-1504830">
        <id>Q9P2K3-2</id>
    </interactant>
    <interactant intactId="EBI-711501">
        <id>Q9BWC9</id>
        <label>CCDC106</label>
    </interactant>
    <organismsDiffer>false</organismsDiffer>
    <experiments>3</experiments>
</comment>
<comment type="interaction">
    <interactant intactId="EBI-1504830">
        <id>Q9P2K3-2</id>
    </interactant>
    <interactant intactId="EBI-10175300">
        <id>Q8TD31-3</id>
        <label>CCHCR1</label>
    </interactant>
    <organismsDiffer>false</organismsDiffer>
    <experiments>3</experiments>
</comment>
<comment type="interaction">
    <interactant intactId="EBI-1504830">
        <id>Q9P2K3-2</id>
    </interactant>
    <interactant intactId="EBI-11522539">
        <id>Q96MT8-3</id>
        <label>CEP63</label>
    </interactant>
    <organismsDiffer>false</organismsDiffer>
    <experiments>3</experiments>
</comment>
<comment type="interaction">
    <interactant intactId="EBI-1504830">
        <id>Q9P2K3-2</id>
    </interactant>
    <interactant intactId="EBI-2349927">
        <id>Q5JST6</id>
        <label>EFHC2</label>
    </interactant>
    <organismsDiffer>false</organismsDiffer>
    <experiments>3</experiments>
</comment>
<comment type="interaction">
    <interactant intactId="EBI-1504830">
        <id>Q9P2K3-2</id>
    </interactant>
    <interactant intactId="EBI-11993062">
        <id>Q8TBF8</id>
        <label>FAM81A</label>
    </interactant>
    <organismsDiffer>false</organismsDiffer>
    <experiments>3</experiments>
</comment>
<comment type="interaction">
    <interactant intactId="EBI-1504830">
        <id>Q9P2K3-2</id>
    </interactant>
    <interactant intactId="EBI-348399">
        <id>P22607</id>
        <label>FGFR3</label>
    </interactant>
    <organismsDiffer>false</organismsDiffer>
    <experiments>3</experiments>
</comment>
<comment type="interaction">
    <interactant intactId="EBI-1504830">
        <id>Q9P2K3-2</id>
    </interactant>
    <interactant intactId="EBI-5661036">
        <id>A1L4K1</id>
        <label>FSD2</label>
    </interactant>
    <organismsDiffer>false</organismsDiffer>
    <experiments>3</experiments>
</comment>
<comment type="interaction">
    <interactant intactId="EBI-1504830">
        <id>Q9P2K3-2</id>
    </interactant>
    <interactant intactId="EBI-743722">
        <id>Q5VSY0</id>
        <label>GKAP1</label>
    </interactant>
    <organismsDiffer>false</organismsDiffer>
    <experiments>3</experiments>
</comment>
<comment type="interaction">
    <interactant intactId="EBI-1504830">
        <id>Q9P2K3-2</id>
    </interactant>
    <interactant intactId="EBI-374781">
        <id>O76003</id>
        <label>GLRX3</label>
    </interactant>
    <organismsDiffer>false</organismsDiffer>
    <experiments>3</experiments>
</comment>
<comment type="interaction">
    <interactant intactId="EBI-1504830">
        <id>Q9P2K3-2</id>
    </interactant>
    <interactant intactId="EBI-618309">
        <id>Q08379</id>
        <label>GOLGA2</label>
    </interactant>
    <organismsDiffer>false</organismsDiffer>
    <experiments>3</experiments>
</comment>
<comment type="interaction">
    <interactant intactId="EBI-1504830">
        <id>Q9P2K3-2</id>
    </interactant>
    <interactant intactId="EBI-11519926">
        <id>Q6PI77</id>
        <label>GPRASP3</label>
    </interactant>
    <organismsDiffer>false</organismsDiffer>
    <experiments>3</experiments>
</comment>
<comment type="interaction">
    <interactant intactId="EBI-1504830">
        <id>Q9P2K3-2</id>
    </interactant>
    <interactant intactId="EBI-717919">
        <id>Q4V328</id>
        <label>GRIPAP1</label>
    </interactant>
    <organismsDiffer>false</organismsDiffer>
    <experiments>3</experiments>
</comment>
<comment type="interaction">
    <interactant intactId="EBI-1504830">
        <id>Q9P2K3-2</id>
    </interactant>
    <interactant intactId="EBI-372619">
        <id>Q14687</id>
        <label>GSE1</label>
    </interactant>
    <organismsDiffer>false</organismsDiffer>
    <experiments>3</experiments>
</comment>
<comment type="interaction">
    <interactant intactId="EBI-1504830">
        <id>Q9P2K3-2</id>
    </interactant>
    <interactant intactId="EBI-351506">
        <id>P06396</id>
        <label>GSN</label>
    </interactant>
    <organismsDiffer>false</organismsDiffer>
    <experiments>3</experiments>
</comment>
<comment type="interaction">
    <interactant intactId="EBI-1504830">
        <id>Q9P2K3-2</id>
    </interactant>
    <interactant intactId="EBI-2558217">
        <id>Q68CZ6</id>
        <label>HAUS3</label>
    </interactant>
    <organismsDiffer>false</organismsDiffer>
    <experiments>3</experiments>
</comment>
<comment type="interaction">
    <interactant intactId="EBI-1504830">
        <id>Q9P2K3-2</id>
    </interactant>
    <interactant intactId="EBI-2549423">
        <id>Q6NT76</id>
        <label>HMBOX1</label>
    </interactant>
    <organismsDiffer>false</organismsDiffer>
    <experiments>3</experiments>
</comment>
<comment type="interaction">
    <interactant intactId="EBI-1504830">
        <id>Q9P2K3-2</id>
    </interactant>
    <interactant intactId="EBI-10961706">
        <id>Q96ED9-2</id>
        <label>HOOK2</label>
    </interactant>
    <organismsDiffer>false</organismsDiffer>
    <experiments>3</experiments>
</comment>
<comment type="interaction">
    <interactant intactId="EBI-1504830">
        <id>Q9P2K3-2</id>
    </interactant>
    <interactant intactId="EBI-350145">
        <id>P01112</id>
        <label>HRAS</label>
    </interactant>
    <organismsDiffer>false</organismsDiffer>
    <experiments>3</experiments>
</comment>
<comment type="interaction">
    <interactant intactId="EBI-1504830">
        <id>Q9P2K3-2</id>
    </interactant>
    <interactant intactId="EBI-7116203">
        <id>O75031</id>
        <label>HSF2BP</label>
    </interactant>
    <organismsDiffer>false</organismsDiffer>
    <experiments>3</experiments>
</comment>
<comment type="interaction">
    <interactant intactId="EBI-1504830">
        <id>Q9P2K3-2</id>
    </interactant>
    <interactant intactId="EBI-12141931">
        <id>Q8NDH6-2</id>
        <label>ICA1L</label>
    </interactant>
    <organismsDiffer>false</organismsDiffer>
    <experiments>3</experiments>
</comment>
<comment type="interaction">
    <interactant intactId="EBI-1504830">
        <id>Q9P2K3-2</id>
    </interactant>
    <interactant intactId="EBI-488533">
        <id>Q8WYH8</id>
        <label>ING5</label>
    </interactant>
    <organismsDiffer>false</organismsDiffer>
    <experiments>3</experiments>
</comment>
<comment type="interaction">
    <interactant intactId="EBI-1504830">
        <id>Q9P2K3-2</id>
    </interactant>
    <interactant intactId="EBI-18398632">
        <id>Q9ULR0-1</id>
        <label>ISY1</label>
    </interactant>
    <organismsDiffer>false</organismsDiffer>
    <experiments>3</experiments>
</comment>
<comment type="interaction">
    <interactant intactId="EBI-1504830">
        <id>Q9P2K3-2</id>
    </interactant>
    <interactant intactId="EBI-710124">
        <id>O60341</id>
        <label>KDM1A</label>
    </interactant>
    <organismsDiffer>false</organismsDiffer>
    <experiments>6</experiments>
</comment>
<comment type="interaction">
    <interactant intactId="EBI-1504830">
        <id>Q9P2K3-2</id>
    </interactant>
    <interactant intactId="EBI-10975473">
        <id>O60333-2</id>
        <label>KIF1B</label>
    </interactant>
    <organismsDiffer>false</organismsDiffer>
    <experiments>3</experiments>
</comment>
<comment type="interaction">
    <interactant intactId="EBI-1504830">
        <id>Q9P2K3-2</id>
    </interactant>
    <interactant intactId="EBI-739566">
        <id>P19012</id>
        <label>KRT15</label>
    </interactant>
    <organismsDiffer>false</organismsDiffer>
    <experiments>3</experiments>
</comment>
<comment type="interaction">
    <interactant intactId="EBI-1504830">
        <id>Q9P2K3-2</id>
    </interactant>
    <interactant intactId="EBI-297888">
        <id>P05783</id>
        <label>KRT18</label>
    </interactant>
    <organismsDiffer>false</organismsDiffer>
    <experiments>3</experiments>
</comment>
<comment type="interaction">
    <interactant intactId="EBI-1504830">
        <id>Q9P2K3-2</id>
    </interactant>
    <interactant intactId="EBI-742756">
        <id>P08727</id>
        <label>KRT19</label>
    </interactant>
    <organismsDiffer>false</organismsDiffer>
    <experiments>3</experiments>
</comment>
<comment type="interaction">
    <interactant intactId="EBI-1504830">
        <id>Q9P2K3-2</id>
    </interactant>
    <interactant intactId="EBI-2952736">
        <id>Q2M2I5</id>
        <label>KRT24</label>
    </interactant>
    <organismsDiffer>false</organismsDiffer>
    <experiments>3</experiments>
</comment>
<comment type="interaction">
    <interactant intactId="EBI-1504830">
        <id>Q9P2K3-2</id>
    </interactant>
    <interactant intactId="EBI-3044087">
        <id>Q7Z3Y8</id>
        <label>KRT27</label>
    </interactant>
    <organismsDiffer>false</organismsDiffer>
    <experiments>3</experiments>
</comment>
<comment type="interaction">
    <interactant intactId="EBI-1504830">
        <id>Q9P2K3-2</id>
    </interactant>
    <interactant intactId="EBI-948001">
        <id>Q15323</id>
        <label>KRT31</label>
    </interactant>
    <organismsDiffer>false</organismsDiffer>
    <experiments>3</experiments>
</comment>
<comment type="interaction">
    <interactant intactId="EBI-1504830">
        <id>Q9P2K3-2</id>
    </interactant>
    <interactant intactId="EBI-2949715">
        <id>O95678</id>
        <label>KRT75</label>
    </interactant>
    <organismsDiffer>false</organismsDiffer>
    <experiments>3</experiments>
</comment>
<comment type="interaction">
    <interactant intactId="EBI-1504830">
        <id>Q9P2K3-2</id>
    </interactant>
    <interactant intactId="EBI-6658186">
        <id>Q86VQ0</id>
        <label>LCA5</label>
    </interactant>
    <organismsDiffer>false</organismsDiffer>
    <experiments>3</experiments>
</comment>
<comment type="interaction">
    <interactant intactId="EBI-1504830">
        <id>Q9P2K3-2</id>
    </interactant>
    <interactant intactId="EBI-12039345">
        <id>Q9UBR4-2</id>
        <label>LHX3</label>
    </interactant>
    <organismsDiffer>false</organismsDiffer>
    <experiments>3</experiments>
</comment>
<comment type="interaction">
    <interactant intactId="EBI-1504830">
        <id>Q9P2K3-2</id>
    </interactant>
    <interactant intactId="EBI-1045155">
        <id>P43360</id>
        <label>MAGEA6</label>
    </interactant>
    <organismsDiffer>false</organismsDiffer>
    <experiments>3</experiments>
</comment>
<comment type="interaction">
    <interactant intactId="EBI-1504830">
        <id>Q9P2K3-2</id>
    </interactant>
    <interactant intactId="EBI-307531">
        <id>P23508</id>
        <label>MCC</label>
    </interactant>
    <organismsDiffer>false</organismsDiffer>
    <experiments>3</experiments>
</comment>
<comment type="interaction">
    <interactant intactId="EBI-1504830">
        <id>Q9P2K3-2</id>
    </interactant>
    <interactant intactId="EBI-6165891">
        <id>Q14696</id>
        <label>MESD</label>
    </interactant>
    <organismsDiffer>false</organismsDiffer>
    <experiments>3</experiments>
</comment>
<comment type="interaction">
    <interactant intactId="EBI-1504830">
        <id>Q9P2K3-2</id>
    </interactant>
    <interactant intactId="EBI-10172526">
        <id>Q9UJV3-2</id>
        <label>MID2</label>
    </interactant>
    <organismsDiffer>false</organismsDiffer>
    <experiments>3</experiments>
</comment>
<comment type="interaction">
    <interactant intactId="EBI-1504830">
        <id>Q9P2K3-2</id>
    </interactant>
    <interactant intactId="EBI-11522433">
        <id>Q5JR59-3</id>
        <label>MTUS2</label>
    </interactant>
    <organismsDiffer>false</organismsDiffer>
    <experiments>4</experiments>
</comment>
<comment type="interaction">
    <interactant intactId="EBI-1504830">
        <id>Q9P2K3-2</id>
    </interactant>
    <interactant intactId="EBI-1246238">
        <id>P17568</id>
        <label>NDUFB7</label>
    </interactant>
    <organismsDiffer>false</organismsDiffer>
    <experiments>3</experiments>
</comment>
<comment type="interaction">
    <interactant intactId="EBI-1504830">
        <id>Q9P2K3-2</id>
    </interactant>
    <interactant intactId="EBI-10172876">
        <id>Q7Z6G3-2</id>
        <label>NECAB2</label>
    </interactant>
    <organismsDiffer>false</organismsDiffer>
    <experiments>3</experiments>
</comment>
<comment type="interaction">
    <interactant intactId="EBI-1504830">
        <id>Q9P2K3-2</id>
    </interactant>
    <interactant intactId="EBI-475646">
        <id>P07196</id>
        <label>NEFL</label>
    </interactant>
    <organismsDiffer>false</organismsDiffer>
    <experiments>3</experiments>
</comment>
<comment type="interaction">
    <interactant intactId="EBI-1504830">
        <id>Q9P2K3-2</id>
    </interactant>
    <interactant intactId="EBI-1042642">
        <id>Q9H7Z3</id>
        <label>NRDE2</label>
    </interactant>
    <organismsDiffer>false</organismsDiffer>
    <experiments>3</experiments>
</comment>
<comment type="interaction">
    <interactant intactId="EBI-1504830">
        <id>Q9P2K3-2</id>
    </interactant>
    <interactant intactId="EBI-2339674">
        <id>Q5T6S3</id>
        <label>PHF19</label>
    </interactant>
    <organismsDiffer>false</organismsDiffer>
    <experiments>3</experiments>
</comment>
<comment type="interaction">
    <interactant intactId="EBI-1504830">
        <id>Q9P2K3-2</id>
    </interactant>
    <interactant intactId="EBI-16434035">
        <id>A0A0S2Z615</id>
        <label>PHF21B</label>
    </interactant>
    <organismsDiffer>false</organismsDiffer>
    <experiments>3</experiments>
</comment>
<comment type="interaction">
    <interactant intactId="EBI-1504830">
        <id>Q9P2K3-2</id>
    </interactant>
    <interactant intactId="EBI-16437793">
        <id>Q96EK2-3</id>
        <label>PHF21B</label>
    </interactant>
    <organismsDiffer>false</organismsDiffer>
    <experiments>3</experiments>
</comment>
<comment type="interaction">
    <interactant intactId="EBI-1504830">
        <id>Q9P2K3-2</id>
    </interactant>
    <interactant intactId="EBI-357318">
        <id>Q9NWS0</id>
        <label>PIH1D1</label>
    </interactant>
    <organismsDiffer>false</organismsDiffer>
    <experiments>3</experiments>
</comment>
<comment type="interaction">
    <interactant intactId="EBI-1504830">
        <id>Q9P2K3-2</id>
    </interactant>
    <interactant intactId="EBI-749195">
        <id>P60891</id>
        <label>PRPS1</label>
    </interactant>
    <organismsDiffer>false</organismsDiffer>
    <experiments>3</experiments>
</comment>
<comment type="interaction">
    <interactant intactId="EBI-1504830">
        <id>Q9P2K3-2</id>
    </interactant>
    <interactant intactId="EBI-17630019">
        <id>Q9NZH5-2</id>
        <label>PTTG2</label>
    </interactant>
    <organismsDiffer>false</organismsDiffer>
    <experiments>3</experiments>
</comment>
<comment type="interaction">
    <interactant intactId="EBI-1504830">
        <id>Q9P2K3-2</id>
    </interactant>
    <interactant intactId="EBI-5235340">
        <id>Q7Z699</id>
        <label>SPRED1</label>
    </interactant>
    <organismsDiffer>false</organismsDiffer>
    <experiments>3</experiments>
</comment>
<comment type="interaction">
    <interactant intactId="EBI-1504830">
        <id>Q9P2K3-2</id>
    </interactant>
    <interactant intactId="EBI-746930">
        <id>Q9H668</id>
        <label>STN1</label>
    </interactant>
    <organismsDiffer>false</organismsDiffer>
    <experiments>3</experiments>
</comment>
<comment type="interaction">
    <interactant intactId="EBI-1504830">
        <id>Q9P2K3-2</id>
    </interactant>
    <interactant intactId="EBI-359224">
        <id>Q13077</id>
        <label>TRAF1</label>
    </interactant>
    <organismsDiffer>false</organismsDiffer>
    <experiments>3</experiments>
</comment>
<comment type="interaction">
    <interactant intactId="EBI-1504830">
        <id>Q9P2K3-2</id>
    </interactant>
    <interactant intactId="EBI-2130429">
        <id>Q9BYV2</id>
        <label>TRIM54</label>
    </interactant>
    <organismsDiffer>false</organismsDiffer>
    <experiments>3</experiments>
</comment>
<comment type="interaction">
    <interactant intactId="EBI-1504830">
        <id>Q9P2K3-2</id>
    </interactant>
    <interactant intactId="EBI-739895">
        <id>Q8N6Y0</id>
        <label>USHBP1</label>
    </interactant>
    <organismsDiffer>false</organismsDiffer>
    <experiments>3</experiments>
</comment>
<comment type="interaction">
    <interactant intactId="EBI-1504830">
        <id>Q9P2K3-2</id>
    </interactant>
    <interactant intactId="EBI-12227803">
        <id>Q5SQQ9-2</id>
        <label>VAX1</label>
    </interactant>
    <organismsDiffer>false</organismsDiffer>
    <experiments>3</experiments>
</comment>
<comment type="interaction">
    <interactant intactId="EBI-1504830">
        <id>Q9P2K3-2</id>
    </interactant>
    <interactant intactId="EBI-720609">
        <id>O76024</id>
        <label>WFS1</label>
    </interactant>
    <organismsDiffer>false</organismsDiffer>
    <experiments>3</experiments>
</comment>
<comment type="interaction">
    <interactant intactId="EBI-1504830">
        <id>Q9P2K3-2</id>
    </interactant>
    <interactant intactId="EBI-20110775">
        <id>Q8NA42</id>
        <label>ZNF383</label>
    </interactant>
    <organismsDiffer>false</organismsDiffer>
    <experiments>3</experiments>
</comment>
<comment type="interaction">
    <interactant intactId="EBI-1504830">
        <id>Q9P2K3-2</id>
    </interactant>
    <interactant intactId="EBI-4395732">
        <id>P0C7X2</id>
        <label>ZNF688</label>
    </interactant>
    <organismsDiffer>false</organismsDiffer>
    <experiments>3</experiments>
</comment>
<comment type="interaction">
    <interactant intactId="EBI-1504830">
        <id>Q9P2K3-2</id>
    </interactant>
    <interactant intactId="EBI-25900580">
        <id>Q9Y649</id>
    </interactant>
    <organismsDiffer>false</organismsDiffer>
    <experiments>3</experiments>
</comment>
<comment type="subcellular location">
    <subcellularLocation>
        <location evidence="2 3">Nucleus</location>
    </subcellularLocation>
</comment>
<comment type="alternative products">
    <event type="alternative splicing"/>
    <isoform>
        <id>Q9P2K3-1</id>
        <name>1</name>
        <sequence type="displayed"/>
    </isoform>
    <isoform>
        <id>Q9P2K3-2</id>
        <name>2</name>
        <sequence type="described" ref="VSP_017460 VSP_017461 VSP_017462"/>
    </isoform>
    <isoform>
        <id>Q9P2K3-3</id>
        <name>3</name>
        <sequence type="described" ref="VSP_017460"/>
    </isoform>
    <isoform>
        <id>Q9P2K3-4</id>
        <name>4</name>
        <sequence type="described" ref="VSP_017460 VSP_041465 VSP_041466"/>
    </isoform>
</comment>
<comment type="similarity">
    <text evidence="8">Belongs to the CoREST family.</text>
</comment>
<comment type="sequence caution" evidence="8">
    <conflict type="erroneous initiation">
        <sequence resource="EMBL-CDS" id="BAA92581"/>
    </conflict>
</comment>
<accession>Q9P2K3</accession>
<accession>B3KYA2</accession>
<accession>B4DYY7</accession>
<accession>Q5VT47</accession>
<accession>Q7L9I5</accession>
<accession>Q8N5U3</accession>
<accession>Q9NV83</accession>
<feature type="chain" id="PRO_0000226781" description="REST corepressor 3">
    <location>
        <begin position="1"/>
        <end position="495"/>
    </location>
</feature>
<feature type="domain" description="ELM2" evidence="2">
    <location>
        <begin position="1"/>
        <end position="83"/>
    </location>
</feature>
<feature type="domain" description="SANT 1" evidence="3">
    <location>
        <begin position="84"/>
        <end position="135"/>
    </location>
</feature>
<feature type="domain" description="SANT 2" evidence="3">
    <location>
        <begin position="285"/>
        <end position="336"/>
    </location>
</feature>
<feature type="region of interest" description="Disordered" evidence="4">
    <location>
        <begin position="147"/>
        <end position="219"/>
    </location>
</feature>
<feature type="region of interest" description="Disordered" evidence="4">
    <location>
        <begin position="346"/>
        <end position="495"/>
    </location>
</feature>
<feature type="coiled-coil region" evidence="1">
    <location>
        <begin position="237"/>
        <end position="273"/>
    </location>
</feature>
<feature type="compositionally biased region" description="Basic and acidic residues" evidence="4">
    <location>
        <begin position="162"/>
        <end position="184"/>
    </location>
</feature>
<feature type="compositionally biased region" description="Basic residues" evidence="4">
    <location>
        <begin position="205"/>
        <end position="217"/>
    </location>
</feature>
<feature type="compositionally biased region" description="Polar residues" evidence="4">
    <location>
        <begin position="348"/>
        <end position="357"/>
    </location>
</feature>
<feature type="compositionally biased region" description="Pro residues" evidence="4">
    <location>
        <begin position="393"/>
        <end position="405"/>
    </location>
</feature>
<feature type="compositionally biased region" description="Low complexity" evidence="4">
    <location>
        <begin position="419"/>
        <end position="428"/>
    </location>
</feature>
<feature type="compositionally biased region" description="Polar residues" evidence="4">
    <location>
        <begin position="475"/>
        <end position="495"/>
    </location>
</feature>
<feature type="modified residue" description="Phosphoserine" evidence="9 10">
    <location>
        <position position="156"/>
    </location>
</feature>
<feature type="modified residue" description="Phosphoserine" evidence="10">
    <location>
        <position position="171"/>
    </location>
</feature>
<feature type="modified residue" description="Phosphothreonine" evidence="10">
    <location>
        <position position="376"/>
    </location>
</feature>
<feature type="modified residue" description="Asymmetric dimethylarginine" evidence="11">
    <location>
        <position position="445"/>
    </location>
</feature>
<feature type="modified residue" description="Asymmetric dimethylarginine" evidence="11">
    <location>
        <position position="457"/>
    </location>
</feature>
<feature type="cross-link" description="Glycyl lysine isopeptide (Lys-Gly) (interchain with G-Cter in SUMO2)" evidence="12">
    <location>
        <position position="20"/>
    </location>
</feature>
<feature type="cross-link" description="Glycyl lysine isopeptide (Lys-Gly) (interchain with G-Cter in SUMO2)" evidence="12">
    <location>
        <position position="193"/>
    </location>
</feature>
<feature type="cross-link" description="Glycyl lysine isopeptide (Lys-Gly) (interchain with G-Cter in SUMO2)" evidence="12">
    <location>
        <position position="285"/>
    </location>
</feature>
<feature type="splice variant" id="VSP_017460" description="In isoform 2, isoform 3 and isoform 4." evidence="6 7">
    <original>M</original>
    <variation>MPGMMEKGPELLGKNRSANGSAKSPAGGGGSGASSTNGGLHYSEPESGCSSDDEHDVGM</variation>
    <location>
        <position position="1"/>
    </location>
</feature>
<feature type="splice variant" id="VSP_017461" description="In isoform 2." evidence="7">
    <original>VRKYGKDFQAIADVIGNKTVGQVKNFFVNYRRRFNLEEVLQEWEAEQGTQASNGDASTLGEETKSASNVPSGKSTDE</original>
    <variation>TDPTGSSDTGSITSCPIIHSNTNSPYCHSEPASTTSSSNTACCPGSSPAASSTPAAGSVHPAPANFKSASTTSYSPC</variation>
    <location>
        <begin position="302"/>
        <end position="378"/>
    </location>
</feature>
<feature type="splice variant" id="VSP_017462" description="In isoform 2." evidence="7">
    <location>
        <begin position="379"/>
        <end position="495"/>
    </location>
</feature>
<feature type="splice variant" id="VSP_041465" description="In isoform 4." evidence="6">
    <original>AQTPQAPRTL</original>
    <variation>VCLCMEFELI</variation>
    <location>
        <begin position="382"/>
        <end position="391"/>
    </location>
</feature>
<feature type="splice variant" id="VSP_041466" description="In isoform 4." evidence="6">
    <location>
        <begin position="392"/>
        <end position="495"/>
    </location>
</feature>
<feature type="sequence variant" id="VAR_025517" description="In dbSNP:rs17856928." evidence="5">
    <original>K</original>
    <variation>R</variation>
    <location>
        <position position="42"/>
    </location>
</feature>
<feature type="helix" evidence="13">
    <location>
        <begin position="225"/>
        <end position="232"/>
    </location>
</feature>
<feature type="strand" evidence="13">
    <location>
        <begin position="233"/>
        <end position="236"/>
    </location>
</feature>
<feature type="helix" evidence="13">
    <location>
        <begin position="237"/>
        <end position="269"/>
    </location>
</feature>
<feature type="turn" evidence="13">
    <location>
        <begin position="270"/>
        <end position="272"/>
    </location>
</feature>
<feature type="helix" evidence="13">
    <location>
        <begin position="275"/>
        <end position="277"/>
    </location>
</feature>
<feature type="helix" evidence="13">
    <location>
        <begin position="292"/>
        <end position="305"/>
    </location>
</feature>
<feature type="helix" evidence="13">
    <location>
        <begin position="309"/>
        <end position="316"/>
    </location>
</feature>
<feature type="helix" evidence="13">
    <location>
        <begin position="322"/>
        <end position="331"/>
    </location>
</feature>
<feature type="turn" evidence="13">
    <location>
        <begin position="332"/>
        <end position="336"/>
    </location>
</feature>
<feature type="helix" evidence="13">
    <location>
        <begin position="337"/>
        <end position="345"/>
    </location>
</feature>
<evidence type="ECO:0000255" key="1"/>
<evidence type="ECO:0000255" key="2">
    <source>
        <dbReference type="PROSITE-ProRule" id="PRU00512"/>
    </source>
</evidence>
<evidence type="ECO:0000255" key="3">
    <source>
        <dbReference type="PROSITE-ProRule" id="PRU00624"/>
    </source>
</evidence>
<evidence type="ECO:0000256" key="4">
    <source>
        <dbReference type="SAM" id="MobiDB-lite"/>
    </source>
</evidence>
<evidence type="ECO:0000269" key="5">
    <source>
    </source>
</evidence>
<evidence type="ECO:0000303" key="6">
    <source>
    </source>
</evidence>
<evidence type="ECO:0000303" key="7">
    <source>
    </source>
</evidence>
<evidence type="ECO:0000305" key="8"/>
<evidence type="ECO:0007744" key="9">
    <source>
    </source>
</evidence>
<evidence type="ECO:0007744" key="10">
    <source>
    </source>
</evidence>
<evidence type="ECO:0007744" key="11">
    <source>
    </source>
</evidence>
<evidence type="ECO:0007744" key="12">
    <source>
    </source>
</evidence>
<evidence type="ECO:0007829" key="13">
    <source>
        <dbReference type="PDB" id="4CZZ"/>
    </source>
</evidence>
<protein>
    <recommendedName>
        <fullName>REST corepressor 3</fullName>
    </recommendedName>
</protein>
<keyword id="KW-0002">3D-structure</keyword>
<keyword id="KW-0025">Alternative splicing</keyword>
<keyword id="KW-0175">Coiled coil</keyword>
<keyword id="KW-1017">Isopeptide bond</keyword>
<keyword id="KW-0488">Methylation</keyword>
<keyword id="KW-0539">Nucleus</keyword>
<keyword id="KW-0597">Phosphoprotein</keyword>
<keyword id="KW-1267">Proteomics identification</keyword>
<keyword id="KW-1185">Reference proteome</keyword>
<keyword id="KW-0677">Repeat</keyword>
<keyword id="KW-0678">Repressor</keyword>
<keyword id="KW-0804">Transcription</keyword>
<keyword id="KW-0805">Transcription regulation</keyword>
<keyword id="KW-0832">Ubl conjugation</keyword>
<organism>
    <name type="scientific">Homo sapiens</name>
    <name type="common">Human</name>
    <dbReference type="NCBI Taxonomy" id="9606"/>
    <lineage>
        <taxon>Eukaryota</taxon>
        <taxon>Metazoa</taxon>
        <taxon>Chordata</taxon>
        <taxon>Craniata</taxon>
        <taxon>Vertebrata</taxon>
        <taxon>Euteleostomi</taxon>
        <taxon>Mammalia</taxon>
        <taxon>Eutheria</taxon>
        <taxon>Euarchontoglires</taxon>
        <taxon>Primates</taxon>
        <taxon>Haplorrhini</taxon>
        <taxon>Catarrhini</taxon>
        <taxon>Hominidae</taxon>
        <taxon>Homo</taxon>
    </lineage>
</organism>
<dbReference type="EMBL" id="AB037764">
    <property type="protein sequence ID" value="BAA92581.1"/>
    <property type="status" value="ALT_INIT"/>
    <property type="molecule type" value="mRNA"/>
</dbReference>
<dbReference type="EMBL" id="AK131312">
    <property type="protein sequence ID" value="BAG54764.1"/>
    <property type="molecule type" value="mRNA"/>
</dbReference>
<dbReference type="EMBL" id="AK302664">
    <property type="protein sequence ID" value="BAG63899.1"/>
    <property type="molecule type" value="mRNA"/>
</dbReference>
<dbReference type="EMBL" id="AK001738">
    <property type="protein sequence ID" value="BAA91872.1"/>
    <property type="molecule type" value="mRNA"/>
</dbReference>
<dbReference type="EMBL" id="AL590101">
    <property type="status" value="NOT_ANNOTATED_CDS"/>
    <property type="molecule type" value="Genomic_DNA"/>
</dbReference>
<dbReference type="EMBL" id="AL611964">
    <property type="status" value="NOT_ANNOTATED_CDS"/>
    <property type="molecule type" value="Genomic_DNA"/>
</dbReference>
<dbReference type="EMBL" id="BC031608">
    <property type="protein sequence ID" value="AAH31608.1"/>
    <property type="molecule type" value="mRNA"/>
</dbReference>
<dbReference type="CCDS" id="CCDS31016.1">
    <molecule id="Q9P2K3-1"/>
</dbReference>
<dbReference type="CCDS" id="CCDS44312.1">
    <molecule id="Q9P2K3-3"/>
</dbReference>
<dbReference type="CCDS" id="CCDS44313.1">
    <molecule id="Q9P2K3-2"/>
</dbReference>
<dbReference type="CCDS" id="CCDS44314.1">
    <molecule id="Q9P2K3-4"/>
</dbReference>
<dbReference type="RefSeq" id="NP_001129695.1">
    <molecule id="Q9P2K3-3"/>
    <property type="nucleotide sequence ID" value="NM_001136223.3"/>
</dbReference>
<dbReference type="RefSeq" id="NP_001129696.2">
    <molecule id="Q9P2K3-2"/>
    <property type="nucleotide sequence ID" value="NM_001136224.4"/>
</dbReference>
<dbReference type="RefSeq" id="NP_001129697.1">
    <molecule id="Q9P2K3-4"/>
    <property type="nucleotide sequence ID" value="NM_001136225.3"/>
</dbReference>
<dbReference type="RefSeq" id="NP_060724.1">
    <molecule id="Q9P2K3-1"/>
    <property type="nucleotide sequence ID" value="NM_018254.5"/>
</dbReference>
<dbReference type="PDB" id="4CZZ">
    <property type="method" value="X-ray"/>
    <property type="resolution" value="3.00 A"/>
    <property type="chains" value="B=1-495"/>
</dbReference>
<dbReference type="PDBsum" id="4CZZ"/>
<dbReference type="SMR" id="Q9P2K3"/>
<dbReference type="BioGRID" id="120876">
    <property type="interactions" value="179"/>
</dbReference>
<dbReference type="ComplexPortal" id="CPX-9068">
    <property type="entry name" value="CoREST transcriptional corepressor complex, RCOR3-HDAC1 variant"/>
</dbReference>
<dbReference type="ComplexPortal" id="CPX-9069">
    <property type="entry name" value="CoREST transcriptional corepressor complex, RCOR3-HDAC2 variant"/>
</dbReference>
<dbReference type="CORUM" id="Q9P2K3"/>
<dbReference type="FunCoup" id="Q9P2K3">
    <property type="interactions" value="3526"/>
</dbReference>
<dbReference type="IntAct" id="Q9P2K3">
    <property type="interactions" value="152"/>
</dbReference>
<dbReference type="MINT" id="Q9P2K3"/>
<dbReference type="STRING" id="9606.ENSP00000413929"/>
<dbReference type="BindingDB" id="Q9P2K3"/>
<dbReference type="ChEMBL" id="CHEMBL4296112"/>
<dbReference type="ChEMBL" id="CHEMBL4296114"/>
<dbReference type="GlyGen" id="Q9P2K3">
    <property type="glycosylation" value="1 site"/>
</dbReference>
<dbReference type="iPTMnet" id="Q9P2K3"/>
<dbReference type="PhosphoSitePlus" id="Q9P2K3"/>
<dbReference type="BioMuta" id="RCOR3"/>
<dbReference type="DMDM" id="90103520"/>
<dbReference type="jPOST" id="Q9P2K3"/>
<dbReference type="MassIVE" id="Q9P2K3"/>
<dbReference type="PaxDb" id="9606-ENSP00000413929"/>
<dbReference type="PeptideAtlas" id="Q9P2K3"/>
<dbReference type="ProteomicsDB" id="83829">
    <molecule id="Q9P2K3-1"/>
</dbReference>
<dbReference type="ProteomicsDB" id="83830">
    <molecule id="Q9P2K3-2"/>
</dbReference>
<dbReference type="ProteomicsDB" id="83831">
    <molecule id="Q9P2K3-3"/>
</dbReference>
<dbReference type="ProteomicsDB" id="83832">
    <molecule id="Q9P2K3-4"/>
</dbReference>
<dbReference type="Pumba" id="Q9P2K3"/>
<dbReference type="Antibodypedia" id="2380">
    <property type="antibodies" value="109 antibodies from 20 providers"/>
</dbReference>
<dbReference type="DNASU" id="55758"/>
<dbReference type="Ensembl" id="ENST00000367005.8">
    <molecule id="Q9P2K3-1"/>
    <property type="protein sequence ID" value="ENSP00000355972.4"/>
    <property type="gene ID" value="ENSG00000117625.14"/>
</dbReference>
<dbReference type="Ensembl" id="ENST00000367006.8">
    <molecule id="Q9P2K3-2"/>
    <property type="protein sequence ID" value="ENSP00000355973.4"/>
    <property type="gene ID" value="ENSG00000117625.14"/>
</dbReference>
<dbReference type="Ensembl" id="ENST00000419091.7">
    <molecule id="Q9P2K3-3"/>
    <property type="protein sequence ID" value="ENSP00000413929.2"/>
    <property type="gene ID" value="ENSG00000117625.14"/>
</dbReference>
<dbReference type="Ensembl" id="ENST00000452621.6">
    <molecule id="Q9P2K3-4"/>
    <property type="protein sequence ID" value="ENSP00000398558.2"/>
    <property type="gene ID" value="ENSG00000117625.14"/>
</dbReference>
<dbReference type="GeneID" id="55758"/>
<dbReference type="KEGG" id="hsa:55758"/>
<dbReference type="MANE-Select" id="ENST00000419091.7">
    <molecule id="Q9P2K3-3"/>
    <property type="protein sequence ID" value="ENSP00000413929.2"/>
    <property type="RefSeq nucleotide sequence ID" value="NM_001136223.3"/>
    <property type="RefSeq protein sequence ID" value="NP_001129695.1"/>
</dbReference>
<dbReference type="UCSC" id="uc001hie.4">
    <molecule id="Q9P2K3-1"/>
    <property type="organism name" value="human"/>
</dbReference>
<dbReference type="AGR" id="HGNC:25594"/>
<dbReference type="CTD" id="55758"/>
<dbReference type="DisGeNET" id="55758"/>
<dbReference type="GeneCards" id="RCOR3"/>
<dbReference type="HGNC" id="HGNC:25594">
    <property type="gene designation" value="RCOR3"/>
</dbReference>
<dbReference type="HPA" id="ENSG00000117625">
    <property type="expression patterns" value="Low tissue specificity"/>
</dbReference>
<dbReference type="MIM" id="620464">
    <property type="type" value="gene"/>
</dbReference>
<dbReference type="neXtProt" id="NX_Q9P2K3"/>
<dbReference type="OpenTargets" id="ENSG00000117625"/>
<dbReference type="PharmGKB" id="PA134917623"/>
<dbReference type="VEuPathDB" id="HostDB:ENSG00000117625"/>
<dbReference type="eggNOG" id="KOG1194">
    <property type="taxonomic scope" value="Eukaryota"/>
</dbReference>
<dbReference type="GeneTree" id="ENSGT00940000154196"/>
<dbReference type="HOGENOM" id="CLU_026741_1_0_1"/>
<dbReference type="InParanoid" id="Q9P2K3"/>
<dbReference type="OMA" id="NCGIACH"/>
<dbReference type="OrthoDB" id="10064338at2759"/>
<dbReference type="PAN-GO" id="Q9P2K3">
    <property type="GO annotations" value="6 GO annotations based on evolutionary models"/>
</dbReference>
<dbReference type="PhylomeDB" id="Q9P2K3"/>
<dbReference type="TreeFam" id="TF106450"/>
<dbReference type="PathwayCommons" id="Q9P2K3"/>
<dbReference type="SignaLink" id="Q9P2K3"/>
<dbReference type="BioGRID-ORCS" id="55758">
    <property type="hits" value="12 hits in 1180 CRISPR screens"/>
</dbReference>
<dbReference type="ChiTaRS" id="RCOR3">
    <property type="organism name" value="human"/>
</dbReference>
<dbReference type="EvolutionaryTrace" id="Q9P2K3"/>
<dbReference type="GenomeRNAi" id="55758"/>
<dbReference type="Pharos" id="Q9P2K3">
    <property type="development level" value="Tdark"/>
</dbReference>
<dbReference type="PRO" id="PR:Q9P2K3"/>
<dbReference type="Proteomes" id="UP000005640">
    <property type="component" value="Chromosome 1"/>
</dbReference>
<dbReference type="RNAct" id="Q9P2K3">
    <property type="molecule type" value="protein"/>
</dbReference>
<dbReference type="Bgee" id="ENSG00000117625">
    <property type="expression patterns" value="Expressed in sperm and 201 other cell types or tissues"/>
</dbReference>
<dbReference type="ExpressionAtlas" id="Q9P2K3">
    <property type="expression patterns" value="baseline and differential"/>
</dbReference>
<dbReference type="GO" id="GO:0005829">
    <property type="term" value="C:cytosol"/>
    <property type="evidence" value="ECO:0000314"/>
    <property type="project" value="HPA"/>
</dbReference>
<dbReference type="GO" id="GO:0000118">
    <property type="term" value="C:histone deacetylase complex"/>
    <property type="evidence" value="ECO:0000318"/>
    <property type="project" value="GO_Central"/>
</dbReference>
<dbReference type="GO" id="GO:0005654">
    <property type="term" value="C:nucleoplasm"/>
    <property type="evidence" value="ECO:0000314"/>
    <property type="project" value="HPA"/>
</dbReference>
<dbReference type="GO" id="GO:0005667">
    <property type="term" value="C:transcription regulator complex"/>
    <property type="evidence" value="ECO:0000318"/>
    <property type="project" value="GO_Central"/>
</dbReference>
<dbReference type="GO" id="GO:0003714">
    <property type="term" value="F:transcription corepressor activity"/>
    <property type="evidence" value="ECO:0000318"/>
    <property type="project" value="GO_Central"/>
</dbReference>
<dbReference type="GO" id="GO:0045892">
    <property type="term" value="P:negative regulation of DNA-templated transcription"/>
    <property type="evidence" value="ECO:0000318"/>
    <property type="project" value="GO_Central"/>
</dbReference>
<dbReference type="GO" id="GO:0006357">
    <property type="term" value="P:regulation of transcription by RNA polymerase II"/>
    <property type="evidence" value="ECO:0000318"/>
    <property type="project" value="GO_Central"/>
</dbReference>
<dbReference type="CDD" id="cd00167">
    <property type="entry name" value="SANT"/>
    <property type="match status" value="1"/>
</dbReference>
<dbReference type="DisProt" id="DP02408">
    <molecule id="Q9P2K3-3"/>
</dbReference>
<dbReference type="FunFam" id="1.20.58.1880:FF:000001">
    <property type="entry name" value="REST corepressor 1"/>
    <property type="match status" value="1"/>
</dbReference>
<dbReference type="FunFam" id="1.10.10.60:FF:000033">
    <property type="entry name" value="REST corepressor 3"/>
    <property type="match status" value="1"/>
</dbReference>
<dbReference type="FunFam" id="4.10.1240.50:FF:000002">
    <property type="entry name" value="REST corepressor isoform X1"/>
    <property type="match status" value="1"/>
</dbReference>
<dbReference type="Gene3D" id="1.20.58.1880">
    <property type="match status" value="1"/>
</dbReference>
<dbReference type="Gene3D" id="4.10.1240.50">
    <property type="match status" value="1"/>
</dbReference>
<dbReference type="Gene3D" id="1.10.10.60">
    <property type="entry name" value="Homeodomain-like"/>
    <property type="match status" value="1"/>
</dbReference>
<dbReference type="IDEAL" id="IID00589"/>
<dbReference type="InterPro" id="IPR000949">
    <property type="entry name" value="ELM2_dom"/>
</dbReference>
<dbReference type="InterPro" id="IPR009057">
    <property type="entry name" value="Homeodomain-like_sf"/>
</dbReference>
<dbReference type="InterPro" id="IPR049048">
    <property type="entry name" value="REST_helical"/>
</dbReference>
<dbReference type="InterPro" id="IPR001005">
    <property type="entry name" value="SANT/Myb"/>
</dbReference>
<dbReference type="InterPro" id="IPR017884">
    <property type="entry name" value="SANT_dom"/>
</dbReference>
<dbReference type="InterPro" id="IPR051066">
    <property type="entry name" value="Trans_reg/Corepressor"/>
</dbReference>
<dbReference type="PANTHER" id="PTHR16089:SF13">
    <property type="entry name" value="REST COREPRESSOR 3"/>
    <property type="match status" value="1"/>
</dbReference>
<dbReference type="PANTHER" id="PTHR16089">
    <property type="entry name" value="REST COREPRESSOR COREST PROTEIN-RELATED"/>
    <property type="match status" value="1"/>
</dbReference>
<dbReference type="Pfam" id="PF01448">
    <property type="entry name" value="ELM2"/>
    <property type="match status" value="1"/>
</dbReference>
<dbReference type="Pfam" id="PF00249">
    <property type="entry name" value="Myb_DNA-binding"/>
    <property type="match status" value="2"/>
</dbReference>
<dbReference type="Pfam" id="PF20878">
    <property type="entry name" value="REST_helical"/>
    <property type="match status" value="1"/>
</dbReference>
<dbReference type="SMART" id="SM01189">
    <property type="entry name" value="ELM2"/>
    <property type="match status" value="1"/>
</dbReference>
<dbReference type="SMART" id="SM00717">
    <property type="entry name" value="SANT"/>
    <property type="match status" value="2"/>
</dbReference>
<dbReference type="SUPFAM" id="SSF46689">
    <property type="entry name" value="Homeodomain-like"/>
    <property type="match status" value="2"/>
</dbReference>
<dbReference type="PROSITE" id="PS51156">
    <property type="entry name" value="ELM2"/>
    <property type="match status" value="1"/>
</dbReference>
<dbReference type="PROSITE" id="PS51293">
    <property type="entry name" value="SANT"/>
    <property type="match status" value="2"/>
</dbReference>
<sequence>MRVGAEYQARIPEFDPGATKYTDKDNGGMLVWSPYHSIPDAKLDEYIAIAKEKHGYNVEQALGMLFWHKHNIEKSLADLPNFTPFPDEWTVEDKVLFEQAFSFHGKSFHRIQQMLPDKTIASLVKYYYSWKKTRSRTSLMDRQARKLANRHNQGDSDDDVEETHPMDGNDSDYDPKKEAKKEGNTEQPVQTSKIGLGRREYQSLQHRHHSQRSKCRPPKGMYLTQEDVVAVSCSPNAANTILRQLDMELISLKRQVQNAKQVNSALKQKMEGGIEEFKPPESNQKINARWTTEEQLLAVQGVRKYGKDFQAIADVIGNKTVGQVKNFFVNYRRRFNLEEVLQEWEAEQGTQASNGDASTLGEETKSASNVPSGKSTDEEEEAQTPQAPRTLGPSPPAPSSTPTPTAPIATLNQPPPLLRPTLPAAPALHRQPPPLQQQARFIQPRPTLNQPPPPLIRPANSMPPRLNPRPVLSTVGGQQPPSLIGIQTDSQSSLH</sequence>
<gene>
    <name type="primary">RCOR3</name>
    <name type="synonym">KIAA1343</name>
</gene>